<reference key="1">
    <citation type="submission" date="2008-08" db="EMBL/GenBank/DDBJ databases">
        <title>Complete sequence of Anaeromyxobacter sp. K.</title>
        <authorList>
            <consortium name="US DOE Joint Genome Institute"/>
            <person name="Lucas S."/>
            <person name="Copeland A."/>
            <person name="Lapidus A."/>
            <person name="Glavina del Rio T."/>
            <person name="Dalin E."/>
            <person name="Tice H."/>
            <person name="Bruce D."/>
            <person name="Goodwin L."/>
            <person name="Pitluck S."/>
            <person name="Saunders E."/>
            <person name="Brettin T."/>
            <person name="Detter J.C."/>
            <person name="Han C."/>
            <person name="Larimer F."/>
            <person name="Land M."/>
            <person name="Hauser L."/>
            <person name="Kyrpides N."/>
            <person name="Ovchinnikiva G."/>
            <person name="Beliaev A."/>
        </authorList>
    </citation>
    <scope>NUCLEOTIDE SEQUENCE [LARGE SCALE GENOMIC DNA]</scope>
    <source>
        <strain>K</strain>
    </source>
</reference>
<name>PYRF_ANASK</name>
<comment type="function">
    <text evidence="1">Catalyzes the decarboxylation of orotidine 5'-monophosphate (OMP) to uridine 5'-monophosphate (UMP).</text>
</comment>
<comment type="catalytic activity">
    <reaction evidence="1">
        <text>orotidine 5'-phosphate + H(+) = UMP + CO2</text>
        <dbReference type="Rhea" id="RHEA:11596"/>
        <dbReference type="ChEBI" id="CHEBI:15378"/>
        <dbReference type="ChEBI" id="CHEBI:16526"/>
        <dbReference type="ChEBI" id="CHEBI:57538"/>
        <dbReference type="ChEBI" id="CHEBI:57865"/>
        <dbReference type="EC" id="4.1.1.23"/>
    </reaction>
</comment>
<comment type="pathway">
    <text evidence="1">Pyrimidine metabolism; UMP biosynthesis via de novo pathway; UMP from orotate: step 2/2.</text>
</comment>
<comment type="subunit">
    <text evidence="1">Homodimer.</text>
</comment>
<comment type="similarity">
    <text evidence="1">Belongs to the OMP decarboxylase family. Type 1 subfamily.</text>
</comment>
<organism>
    <name type="scientific">Anaeromyxobacter sp. (strain K)</name>
    <dbReference type="NCBI Taxonomy" id="447217"/>
    <lineage>
        <taxon>Bacteria</taxon>
        <taxon>Pseudomonadati</taxon>
        <taxon>Myxococcota</taxon>
        <taxon>Myxococcia</taxon>
        <taxon>Myxococcales</taxon>
        <taxon>Cystobacterineae</taxon>
        <taxon>Anaeromyxobacteraceae</taxon>
        <taxon>Anaeromyxobacter</taxon>
    </lineage>
</organism>
<proteinExistence type="inferred from homology"/>
<evidence type="ECO:0000255" key="1">
    <source>
        <dbReference type="HAMAP-Rule" id="MF_01200"/>
    </source>
</evidence>
<sequence>MKPSERICAALDFPTFAAAEPFARAVAPEVGLLKVGLELFAAEGPAAVRAAARLGRPVFLDLKLHDIPNTVEGAARSAAASGAALLTVHAAGGAEMVKAAVRGAGPGVRVLAVTVLTSLDAAALDAVGLAGPPEAAVVRLARLAVGAGAGGIVCSPHEVAAVRAAVGPGPLLVVPGVRPAGAAKGDQARVATPAEAVRAGADVIVVGRPLRDAPDPAAAARAIAAGL</sequence>
<feature type="chain" id="PRO_1000138510" description="Orotidine 5'-phosphate decarboxylase">
    <location>
        <begin position="1"/>
        <end position="227"/>
    </location>
</feature>
<feature type="active site" description="Proton donor" evidence="1">
    <location>
        <position position="63"/>
    </location>
</feature>
<feature type="binding site" evidence="1">
    <location>
        <position position="12"/>
    </location>
    <ligand>
        <name>substrate</name>
    </ligand>
</feature>
<feature type="binding site" evidence="1">
    <location>
        <position position="34"/>
    </location>
    <ligand>
        <name>substrate</name>
    </ligand>
</feature>
<feature type="binding site" evidence="1">
    <location>
        <begin position="61"/>
        <end position="70"/>
    </location>
    <ligand>
        <name>substrate</name>
    </ligand>
</feature>
<feature type="binding site" evidence="1">
    <location>
        <position position="117"/>
    </location>
    <ligand>
        <name>substrate</name>
    </ligand>
</feature>
<feature type="binding site" evidence="1">
    <location>
        <position position="178"/>
    </location>
    <ligand>
        <name>substrate</name>
    </ligand>
</feature>
<feature type="binding site" evidence="1">
    <location>
        <position position="187"/>
    </location>
    <ligand>
        <name>substrate</name>
    </ligand>
</feature>
<feature type="binding site" evidence="1">
    <location>
        <position position="207"/>
    </location>
    <ligand>
        <name>substrate</name>
    </ligand>
</feature>
<feature type="binding site" evidence="1">
    <location>
        <position position="208"/>
    </location>
    <ligand>
        <name>substrate</name>
    </ligand>
</feature>
<keyword id="KW-0210">Decarboxylase</keyword>
<keyword id="KW-0456">Lyase</keyword>
<keyword id="KW-0665">Pyrimidine biosynthesis</keyword>
<gene>
    <name evidence="1" type="primary">pyrF</name>
    <name type="ordered locus">AnaeK_4055</name>
</gene>
<dbReference type="EC" id="4.1.1.23" evidence="1"/>
<dbReference type="EMBL" id="CP001131">
    <property type="protein sequence ID" value="ACG75260.1"/>
    <property type="molecule type" value="Genomic_DNA"/>
</dbReference>
<dbReference type="RefSeq" id="WP_012528013.1">
    <property type="nucleotide sequence ID" value="NC_011145.1"/>
</dbReference>
<dbReference type="SMR" id="B4UGH8"/>
<dbReference type="KEGG" id="ank:AnaeK_4055"/>
<dbReference type="HOGENOM" id="CLU_067069_1_0_7"/>
<dbReference type="UniPathway" id="UPA00070">
    <property type="reaction ID" value="UER00120"/>
</dbReference>
<dbReference type="Proteomes" id="UP000001871">
    <property type="component" value="Chromosome"/>
</dbReference>
<dbReference type="GO" id="GO:0005829">
    <property type="term" value="C:cytosol"/>
    <property type="evidence" value="ECO:0007669"/>
    <property type="project" value="TreeGrafter"/>
</dbReference>
<dbReference type="GO" id="GO:0004590">
    <property type="term" value="F:orotidine-5'-phosphate decarboxylase activity"/>
    <property type="evidence" value="ECO:0007669"/>
    <property type="project" value="UniProtKB-UniRule"/>
</dbReference>
<dbReference type="GO" id="GO:0006207">
    <property type="term" value="P:'de novo' pyrimidine nucleobase biosynthetic process"/>
    <property type="evidence" value="ECO:0007669"/>
    <property type="project" value="InterPro"/>
</dbReference>
<dbReference type="GO" id="GO:0044205">
    <property type="term" value="P:'de novo' UMP biosynthetic process"/>
    <property type="evidence" value="ECO:0007669"/>
    <property type="project" value="UniProtKB-UniRule"/>
</dbReference>
<dbReference type="CDD" id="cd04725">
    <property type="entry name" value="OMP_decarboxylase_like"/>
    <property type="match status" value="1"/>
</dbReference>
<dbReference type="Gene3D" id="3.20.20.70">
    <property type="entry name" value="Aldolase class I"/>
    <property type="match status" value="1"/>
</dbReference>
<dbReference type="HAMAP" id="MF_01200_B">
    <property type="entry name" value="OMPdecase_type1_B"/>
    <property type="match status" value="1"/>
</dbReference>
<dbReference type="InterPro" id="IPR013785">
    <property type="entry name" value="Aldolase_TIM"/>
</dbReference>
<dbReference type="InterPro" id="IPR014732">
    <property type="entry name" value="OMPdecase"/>
</dbReference>
<dbReference type="InterPro" id="IPR018089">
    <property type="entry name" value="OMPdecase_AS"/>
</dbReference>
<dbReference type="InterPro" id="IPR047596">
    <property type="entry name" value="OMPdecase_bac"/>
</dbReference>
<dbReference type="InterPro" id="IPR001754">
    <property type="entry name" value="OMPdeCOase_dom"/>
</dbReference>
<dbReference type="InterPro" id="IPR011060">
    <property type="entry name" value="RibuloseP-bd_barrel"/>
</dbReference>
<dbReference type="NCBIfam" id="NF001273">
    <property type="entry name" value="PRK00230.1"/>
    <property type="match status" value="1"/>
</dbReference>
<dbReference type="NCBIfam" id="TIGR01740">
    <property type="entry name" value="pyrF"/>
    <property type="match status" value="1"/>
</dbReference>
<dbReference type="PANTHER" id="PTHR32119">
    <property type="entry name" value="OROTIDINE 5'-PHOSPHATE DECARBOXYLASE"/>
    <property type="match status" value="1"/>
</dbReference>
<dbReference type="PANTHER" id="PTHR32119:SF2">
    <property type="entry name" value="OROTIDINE 5'-PHOSPHATE DECARBOXYLASE"/>
    <property type="match status" value="1"/>
</dbReference>
<dbReference type="Pfam" id="PF00215">
    <property type="entry name" value="OMPdecase"/>
    <property type="match status" value="1"/>
</dbReference>
<dbReference type="SMART" id="SM00934">
    <property type="entry name" value="OMPdecase"/>
    <property type="match status" value="1"/>
</dbReference>
<dbReference type="SUPFAM" id="SSF51366">
    <property type="entry name" value="Ribulose-phoshate binding barrel"/>
    <property type="match status" value="1"/>
</dbReference>
<dbReference type="PROSITE" id="PS00156">
    <property type="entry name" value="OMPDECASE"/>
    <property type="match status" value="1"/>
</dbReference>
<accession>B4UGH8</accession>
<protein>
    <recommendedName>
        <fullName evidence="1">Orotidine 5'-phosphate decarboxylase</fullName>
        <ecNumber evidence="1">4.1.1.23</ecNumber>
    </recommendedName>
    <alternativeName>
        <fullName evidence="1">OMP decarboxylase</fullName>
        <shortName evidence="1">OMPDCase</shortName>
        <shortName evidence="1">OMPdecase</shortName>
    </alternativeName>
</protein>